<sequence>MKIIQEIPERNIIKLIPENLDDLWHLSNIIQPYNAIYAVTERRTEDKGDKLRADRGTKRRVFLGIKAEKINFHEDFNRLRVSGKIIHAPDDIPIGSYHTIDIEPLLQVSVQKNWKKWDLARLKDAEDSSKKPKVVVVIMDDSEADIFLVREFGIKELASIKSGISKKLDYKQNEQAKFSYYSDIINSISEYEGKILFAGPGFGKNNIQNYISEKHKDLAPNVVIESANHTGKSGLSEILKSGIIDKIYGEARISKETQIIEKLLEEISKKGLAAYGIESVSNAMNYSAIDTLLLTDEYLRRNRRTIEELMNNVENINGNILIISTEHDAGKQLKALGGISALLRFPIE</sequence>
<proteinExistence type="inferred from homology"/>
<feature type="chain" id="PRO_0000361797" description="Protein pelota homolog">
    <location>
        <begin position="1"/>
        <end position="348"/>
    </location>
</feature>
<accession>A9A8K6</accession>
<organism>
    <name type="scientific">Methanococcus maripaludis (strain C6 / ATCC BAA-1332)</name>
    <dbReference type="NCBI Taxonomy" id="444158"/>
    <lineage>
        <taxon>Archaea</taxon>
        <taxon>Methanobacteriati</taxon>
        <taxon>Methanobacteriota</taxon>
        <taxon>Methanomada group</taxon>
        <taxon>Methanococci</taxon>
        <taxon>Methanococcales</taxon>
        <taxon>Methanococcaceae</taxon>
        <taxon>Methanococcus</taxon>
    </lineage>
</organism>
<protein>
    <recommendedName>
        <fullName evidence="1">Protein pelota homolog</fullName>
        <ecNumber evidence="1">3.1.-.-</ecNumber>
    </recommendedName>
</protein>
<comment type="function">
    <text evidence="1">May function in recognizing stalled ribosomes, interact with stem-loop structures in stalled mRNA molecules, and effect endonucleolytic cleavage of the mRNA. May play a role in the release non-functional ribosomes and degradation of damaged mRNAs. Has endoribonuclease activity.</text>
</comment>
<comment type="cofactor">
    <cofactor evidence="1">
        <name>a divalent metal cation</name>
        <dbReference type="ChEBI" id="CHEBI:60240"/>
    </cofactor>
</comment>
<comment type="subunit">
    <text evidence="1">Monomer.</text>
</comment>
<comment type="subcellular location">
    <subcellularLocation>
        <location evidence="1">Cytoplasm</location>
    </subcellularLocation>
</comment>
<comment type="domain">
    <text evidence="1">The N-terminal domain has the RNA-binding Sm fold. It harbors the endoribonuclease activity.</text>
</comment>
<comment type="similarity">
    <text evidence="1">Belongs to the eukaryotic release factor 1 family. Pelota subfamily.</text>
</comment>
<dbReference type="EC" id="3.1.-.-" evidence="1"/>
<dbReference type="EMBL" id="CP000867">
    <property type="protein sequence ID" value="ABX01679.1"/>
    <property type="molecule type" value="Genomic_DNA"/>
</dbReference>
<dbReference type="SMR" id="A9A8K6"/>
<dbReference type="STRING" id="444158.MmarC6_0862"/>
<dbReference type="KEGG" id="mmx:MmarC6_0862"/>
<dbReference type="eggNOG" id="arCOG01741">
    <property type="taxonomic scope" value="Archaea"/>
</dbReference>
<dbReference type="HOGENOM" id="CLU_023334_0_0_2"/>
<dbReference type="OrthoDB" id="31300at2157"/>
<dbReference type="PhylomeDB" id="A9A8K6"/>
<dbReference type="GO" id="GO:0005737">
    <property type="term" value="C:cytoplasm"/>
    <property type="evidence" value="ECO:0007669"/>
    <property type="project" value="UniProtKB-SubCell"/>
</dbReference>
<dbReference type="GO" id="GO:0004519">
    <property type="term" value="F:endonuclease activity"/>
    <property type="evidence" value="ECO:0007669"/>
    <property type="project" value="UniProtKB-UniRule"/>
</dbReference>
<dbReference type="GO" id="GO:0046872">
    <property type="term" value="F:metal ion binding"/>
    <property type="evidence" value="ECO:0007669"/>
    <property type="project" value="UniProtKB-UniRule"/>
</dbReference>
<dbReference type="GO" id="GO:0070651">
    <property type="term" value="P:nonfunctional rRNA decay"/>
    <property type="evidence" value="ECO:0007669"/>
    <property type="project" value="TreeGrafter"/>
</dbReference>
<dbReference type="GO" id="GO:0070966">
    <property type="term" value="P:nuclear-transcribed mRNA catabolic process, no-go decay"/>
    <property type="evidence" value="ECO:0007669"/>
    <property type="project" value="InterPro"/>
</dbReference>
<dbReference type="GO" id="GO:0070481">
    <property type="term" value="P:nuclear-transcribed mRNA catabolic process, non-stop decay"/>
    <property type="evidence" value="ECO:0007669"/>
    <property type="project" value="InterPro"/>
</dbReference>
<dbReference type="GO" id="GO:0032790">
    <property type="term" value="P:ribosome disassembly"/>
    <property type="evidence" value="ECO:0007669"/>
    <property type="project" value="TreeGrafter"/>
</dbReference>
<dbReference type="GO" id="GO:0071025">
    <property type="term" value="P:RNA surveillance"/>
    <property type="evidence" value="ECO:0007669"/>
    <property type="project" value="InterPro"/>
</dbReference>
<dbReference type="Gene3D" id="3.30.1330.30">
    <property type="match status" value="1"/>
</dbReference>
<dbReference type="Gene3D" id="3.30.420.60">
    <property type="entry name" value="eRF1 domain 2"/>
    <property type="match status" value="1"/>
</dbReference>
<dbReference type="Gene3D" id="2.30.30.870">
    <property type="entry name" value="Pelota, domain A"/>
    <property type="match status" value="1"/>
</dbReference>
<dbReference type="HAMAP" id="MF_01853">
    <property type="entry name" value="PelO"/>
    <property type="match status" value="1"/>
</dbReference>
<dbReference type="InterPro" id="IPR042226">
    <property type="entry name" value="eFR1_2_sf"/>
</dbReference>
<dbReference type="InterPro" id="IPR005140">
    <property type="entry name" value="eRF1_1_Pelota"/>
</dbReference>
<dbReference type="InterPro" id="IPR005141">
    <property type="entry name" value="eRF1_2"/>
</dbReference>
<dbReference type="InterPro" id="IPR005142">
    <property type="entry name" value="eRF1_3"/>
</dbReference>
<dbReference type="InterPro" id="IPR038069">
    <property type="entry name" value="Pelota/DOM34_N"/>
</dbReference>
<dbReference type="InterPro" id="IPR023521">
    <property type="entry name" value="Pelota_arc"/>
</dbReference>
<dbReference type="InterPro" id="IPR029064">
    <property type="entry name" value="Ribosomal_eL30-like_sf"/>
</dbReference>
<dbReference type="InterPro" id="IPR004405">
    <property type="entry name" value="Transl-rel_pelota"/>
</dbReference>
<dbReference type="NCBIfam" id="TIGR00111">
    <property type="entry name" value="pelota"/>
    <property type="match status" value="1"/>
</dbReference>
<dbReference type="PANTHER" id="PTHR10853">
    <property type="entry name" value="PELOTA"/>
    <property type="match status" value="1"/>
</dbReference>
<dbReference type="PANTHER" id="PTHR10853:SF0">
    <property type="entry name" value="PROTEIN PELOTA HOMOLOG"/>
    <property type="match status" value="1"/>
</dbReference>
<dbReference type="Pfam" id="PF03463">
    <property type="entry name" value="eRF1_1"/>
    <property type="match status" value="1"/>
</dbReference>
<dbReference type="Pfam" id="PF03464">
    <property type="entry name" value="eRF1_2"/>
    <property type="match status" value="1"/>
</dbReference>
<dbReference type="Pfam" id="PF03465">
    <property type="entry name" value="eRF1_3"/>
    <property type="match status" value="1"/>
</dbReference>
<dbReference type="SMART" id="SM01194">
    <property type="entry name" value="eRF1_1"/>
    <property type="match status" value="1"/>
</dbReference>
<dbReference type="SUPFAM" id="SSF159065">
    <property type="entry name" value="Dom34/Pelota N-terminal domain-like"/>
    <property type="match status" value="1"/>
</dbReference>
<dbReference type="SUPFAM" id="SSF55315">
    <property type="entry name" value="L30e-like"/>
    <property type="match status" value="1"/>
</dbReference>
<dbReference type="SUPFAM" id="SSF53137">
    <property type="entry name" value="Translational machinery components"/>
    <property type="match status" value="1"/>
</dbReference>
<reference key="1">
    <citation type="submission" date="2007-10" db="EMBL/GenBank/DDBJ databases">
        <title>Complete sequence of Methanococcus maripaludis C6.</title>
        <authorList>
            <consortium name="US DOE Joint Genome Institute"/>
            <person name="Copeland A."/>
            <person name="Lucas S."/>
            <person name="Lapidus A."/>
            <person name="Barry K."/>
            <person name="Glavina del Rio T."/>
            <person name="Dalin E."/>
            <person name="Tice H."/>
            <person name="Pitluck S."/>
            <person name="Clum A."/>
            <person name="Schmutz J."/>
            <person name="Larimer F."/>
            <person name="Land M."/>
            <person name="Hauser L."/>
            <person name="Kyrpides N."/>
            <person name="Mikhailova N."/>
            <person name="Sieprawska-Lupa M."/>
            <person name="Whitman W.B."/>
            <person name="Richardson P."/>
        </authorList>
    </citation>
    <scope>NUCLEOTIDE SEQUENCE [LARGE SCALE GENOMIC DNA]</scope>
    <source>
        <strain>C6 / ATCC BAA-1332</strain>
    </source>
</reference>
<gene>
    <name evidence="1" type="primary">pelA</name>
    <name type="ordered locus">MmarC6_0862</name>
</gene>
<name>PELO_METM6</name>
<evidence type="ECO:0000255" key="1">
    <source>
        <dbReference type="HAMAP-Rule" id="MF_01853"/>
    </source>
</evidence>
<keyword id="KW-0963">Cytoplasm</keyword>
<keyword id="KW-0255">Endonuclease</keyword>
<keyword id="KW-0378">Hydrolase</keyword>
<keyword id="KW-0479">Metal-binding</keyword>
<keyword id="KW-0540">Nuclease</keyword>